<protein>
    <recommendedName>
        <fullName evidence="1">Small, acid-soluble spore protein O</fullName>
        <shortName evidence="1">SASP O</shortName>
    </recommendedName>
</protein>
<sequence length="49" mass="5431">MGKRKANHTISGMNVASAQGQGTGYNEEFANEPLTPAERQNNKKRKKNQ</sequence>
<comment type="subcellular location">
    <subcellularLocation>
        <location evidence="1">Spore core</location>
    </subcellularLocation>
</comment>
<comment type="induction">
    <text evidence="1">Expressed only in the forespore compartment of sporulating cells.</text>
</comment>
<comment type="similarity">
    <text evidence="1">Belongs to the SspO family.</text>
</comment>
<proteinExistence type="inferred from homology"/>
<accession>B7ISF6</accession>
<dbReference type="EMBL" id="CP001186">
    <property type="protein sequence ID" value="ACK94137.1"/>
    <property type="molecule type" value="Genomic_DNA"/>
</dbReference>
<dbReference type="RefSeq" id="WP_000518060.1">
    <property type="nucleotide sequence ID" value="NC_011772.1"/>
</dbReference>
<dbReference type="KEGG" id="bcg:BCG9842_B1592"/>
<dbReference type="HOGENOM" id="CLU_206342_0_0_9"/>
<dbReference type="Proteomes" id="UP000006744">
    <property type="component" value="Chromosome"/>
</dbReference>
<dbReference type="GO" id="GO:0042601">
    <property type="term" value="C:endospore-forming forespore"/>
    <property type="evidence" value="ECO:0007669"/>
    <property type="project" value="InterPro"/>
</dbReference>
<dbReference type="GO" id="GO:0030436">
    <property type="term" value="P:asexual sporulation"/>
    <property type="evidence" value="ECO:0007669"/>
    <property type="project" value="UniProtKB-UniRule"/>
</dbReference>
<dbReference type="GO" id="GO:0030435">
    <property type="term" value="P:sporulation resulting in formation of a cellular spore"/>
    <property type="evidence" value="ECO:0007669"/>
    <property type="project" value="UniProtKB-KW"/>
</dbReference>
<dbReference type="HAMAP" id="MF_00665">
    <property type="entry name" value="SspO"/>
    <property type="match status" value="1"/>
</dbReference>
<dbReference type="InterPro" id="IPR012613">
    <property type="entry name" value="SASP_SspO"/>
</dbReference>
<dbReference type="NCBIfam" id="TIGR02864">
    <property type="entry name" value="spore_sspO"/>
    <property type="match status" value="1"/>
</dbReference>
<dbReference type="Pfam" id="PF08175">
    <property type="entry name" value="SspO"/>
    <property type="match status" value="1"/>
</dbReference>
<name>SSPO_BACC2</name>
<gene>
    <name evidence="1" type="primary">sspO</name>
    <name type="ordered locus">BCG9842_B1592</name>
</gene>
<reference key="1">
    <citation type="submission" date="2008-10" db="EMBL/GenBank/DDBJ databases">
        <title>Genome sequence of Bacillus cereus G9842.</title>
        <authorList>
            <person name="Dodson R.J."/>
            <person name="Durkin A.S."/>
            <person name="Rosovitz M.J."/>
            <person name="Rasko D.A."/>
            <person name="Hoffmaster A."/>
            <person name="Ravel J."/>
            <person name="Sutton G."/>
        </authorList>
    </citation>
    <scope>NUCLEOTIDE SEQUENCE [LARGE SCALE GENOMIC DNA]</scope>
    <source>
        <strain>G9842</strain>
    </source>
</reference>
<evidence type="ECO:0000255" key="1">
    <source>
        <dbReference type="HAMAP-Rule" id="MF_00665"/>
    </source>
</evidence>
<evidence type="ECO:0000256" key="2">
    <source>
        <dbReference type="SAM" id="MobiDB-lite"/>
    </source>
</evidence>
<keyword id="KW-0749">Sporulation</keyword>
<organism>
    <name type="scientific">Bacillus cereus (strain G9842)</name>
    <dbReference type="NCBI Taxonomy" id="405531"/>
    <lineage>
        <taxon>Bacteria</taxon>
        <taxon>Bacillati</taxon>
        <taxon>Bacillota</taxon>
        <taxon>Bacilli</taxon>
        <taxon>Bacillales</taxon>
        <taxon>Bacillaceae</taxon>
        <taxon>Bacillus</taxon>
        <taxon>Bacillus cereus group</taxon>
    </lineage>
</organism>
<feature type="chain" id="PRO_1000131498" description="Small, acid-soluble spore protein O">
    <location>
        <begin position="1"/>
        <end position="49"/>
    </location>
</feature>
<feature type="region of interest" description="Disordered" evidence="2">
    <location>
        <begin position="1"/>
        <end position="49"/>
    </location>
</feature>
<feature type="compositionally biased region" description="Polar residues" evidence="2">
    <location>
        <begin position="8"/>
        <end position="20"/>
    </location>
</feature>